<keyword id="KW-0002">3D-structure</keyword>
<keyword id="KW-0009">Actin-binding</keyword>
<keyword id="KW-0025">Alternative splicing</keyword>
<keyword id="KW-0067">ATP-binding</keyword>
<keyword id="KW-0112">Calmodulin-binding</keyword>
<keyword id="KW-0175">Coiled coil</keyword>
<keyword id="KW-0963">Cytoplasm</keyword>
<keyword id="KW-0903">Direct protein sequencing</keyword>
<keyword id="KW-0505">Motor protein</keyword>
<keyword id="KW-0514">Muscle protein</keyword>
<keyword id="KW-0518">Myosin</keyword>
<keyword id="KW-0547">Nucleotide-binding</keyword>
<keyword id="KW-1185">Reference proteome</keyword>
<keyword id="KW-0787">Thick filament</keyword>
<name>MYSA_DROME</name>
<gene>
    <name type="primary">Mhc</name>
    <name type="ORF">CG17927</name>
</gene>
<accession>P05661</accession>
<accession>O18392</accession>
<accession>O18393</accession>
<accession>Q24412</accession>
<accession>Q7JN62</accession>
<accession>Q7JN63</accession>
<accession>Q7JQ08</accession>
<accession>Q7JQ09</accession>
<accession>Q7M4K4</accession>
<accession>Q8INZ9</accession>
<accession>Q8IP00</accession>
<accession>Q8IP01</accession>
<accession>Q8IP02</accession>
<accession>Q8IP03</accession>
<accession>Q8IP04</accession>
<accession>Q8IP05</accession>
<accession>Q8IP06</accession>
<accession>Q8IP07</accession>
<accession>Q8IP08</accession>
<accession>Q8IP09</accession>
<accession>Q8IP10</accession>
<accession>Q9TY21</accession>
<accession>Q9TY22</accession>
<accession>Q9TYD7</accession>
<accession>Q9VJI3</accession>
<dbReference type="EMBL" id="M61229">
    <property type="protein sequence ID" value="AAA28686.1"/>
    <property type="molecule type" value="Genomic_DNA"/>
</dbReference>
<dbReference type="EMBL" id="M61229">
    <property type="protein sequence ID" value="AAA28687.1"/>
    <property type="molecule type" value="Genomic_DNA"/>
</dbReference>
<dbReference type="EMBL" id="X53155">
    <property type="protein sequence ID" value="CAA37308.1"/>
    <property type="molecule type" value="Genomic_DNA"/>
</dbReference>
<dbReference type="EMBL" id="X53155">
    <property type="protein sequence ID" value="CAA37309.1"/>
    <property type="molecule type" value="Genomic_DNA"/>
</dbReference>
<dbReference type="EMBL" id="X53155">
    <property type="protein sequence ID" value="CAA37310.1"/>
    <property type="molecule type" value="Genomic_DNA"/>
</dbReference>
<dbReference type="EMBL" id="X53155">
    <property type="protein sequence ID" value="CAA37311.1"/>
    <property type="molecule type" value="Genomic_DNA"/>
</dbReference>
<dbReference type="EMBL" id="AE014134">
    <property type="protein sequence ID" value="AAF53566.4"/>
    <property type="molecule type" value="Genomic_DNA"/>
</dbReference>
<dbReference type="EMBL" id="AE014134">
    <property type="protein sequence ID" value="AAN10959.1"/>
    <property type="molecule type" value="Genomic_DNA"/>
</dbReference>
<dbReference type="EMBL" id="AE014134">
    <property type="protein sequence ID" value="AAN10960.1"/>
    <property type="molecule type" value="Genomic_DNA"/>
</dbReference>
<dbReference type="EMBL" id="AE014134">
    <property type="protein sequence ID" value="AAN10961.1"/>
    <property type="molecule type" value="Genomic_DNA"/>
</dbReference>
<dbReference type="EMBL" id="AE014134">
    <property type="protein sequence ID" value="AAN10962.1"/>
    <property type="molecule type" value="Genomic_DNA"/>
</dbReference>
<dbReference type="EMBL" id="AE014134">
    <property type="protein sequence ID" value="AAN10963.1"/>
    <property type="molecule type" value="Genomic_DNA"/>
</dbReference>
<dbReference type="EMBL" id="AE014134">
    <property type="protein sequence ID" value="AAN10964.1"/>
    <property type="molecule type" value="Genomic_DNA"/>
</dbReference>
<dbReference type="EMBL" id="AE014134">
    <property type="protein sequence ID" value="AAN10965.1"/>
    <property type="molecule type" value="Genomic_DNA"/>
</dbReference>
<dbReference type="EMBL" id="AE014134">
    <property type="protein sequence ID" value="AAN10966.1"/>
    <property type="molecule type" value="Genomic_DNA"/>
</dbReference>
<dbReference type="EMBL" id="AE014134">
    <property type="protein sequence ID" value="AAN10967.1"/>
    <property type="molecule type" value="Genomic_DNA"/>
</dbReference>
<dbReference type="EMBL" id="AE014134">
    <property type="protein sequence ID" value="AAN10968.1"/>
    <property type="molecule type" value="Genomic_DNA"/>
</dbReference>
<dbReference type="EMBL" id="AE014134">
    <property type="protein sequence ID" value="AAN10969.1"/>
    <property type="molecule type" value="Genomic_DNA"/>
</dbReference>
<dbReference type="EMBL" id="AE014134">
    <property type="protein sequence ID" value="AAN10970.1"/>
    <property type="molecule type" value="Genomic_DNA"/>
</dbReference>
<dbReference type="EMBL" id="J02788">
    <property type="protein sequence ID" value="AAA28706.1"/>
    <property type="molecule type" value="Genomic_DNA"/>
</dbReference>
<dbReference type="EMBL" id="J02788">
    <property type="protein sequence ID" value="AAA28707.1"/>
    <property type="molecule type" value="Genomic_DNA"/>
</dbReference>
<dbReference type="EMBL" id="X60196">
    <property type="protein sequence ID" value="CAA42752.1"/>
    <property type="molecule type" value="Genomic_DNA"/>
</dbReference>
<dbReference type="EMBL" id="X60196">
    <property type="protein sequence ID" value="CAA42753.1"/>
    <property type="molecule type" value="Genomic_DNA"/>
</dbReference>
<dbReference type="EMBL" id="X60196">
    <property type="protein sequence ID" value="CAA42754.1"/>
    <property type="molecule type" value="Genomic_DNA"/>
</dbReference>
<dbReference type="EMBL" id="M13360">
    <property type="protein sequence ID" value="AAA28708.1"/>
    <property type="molecule type" value="Genomic_DNA"/>
</dbReference>
<dbReference type="EMBL" id="M13360">
    <property type="protein sequence ID" value="AAA28709.1"/>
    <property type="molecule type" value="Genomic_DNA"/>
</dbReference>
<dbReference type="PIR" id="A18942">
    <property type="entry name" value="A18942"/>
</dbReference>
<dbReference type="PIR" id="A25380">
    <property type="entry name" value="A25380"/>
</dbReference>
<dbReference type="PIR" id="A28492">
    <property type="entry name" value="A28492"/>
</dbReference>
<dbReference type="PIR" id="A32491">
    <property type="entry name" value="A32491"/>
</dbReference>
<dbReference type="PIR" id="A35815">
    <property type="entry name" value="A35815"/>
</dbReference>
<dbReference type="PIR" id="B25380">
    <property type="entry name" value="B25380"/>
</dbReference>
<dbReference type="PIR" id="B32491">
    <property type="entry name" value="B32491"/>
</dbReference>
<dbReference type="PIR" id="B35815">
    <property type="entry name" value="B35815"/>
</dbReference>
<dbReference type="PIR" id="C35815">
    <property type="entry name" value="C35815"/>
</dbReference>
<dbReference type="PIR" id="D35815">
    <property type="entry name" value="D35815"/>
</dbReference>
<dbReference type="PIR" id="S16600">
    <property type="entry name" value="S16600"/>
</dbReference>
<dbReference type="PIR" id="S16601">
    <property type="entry name" value="S16601"/>
</dbReference>
<dbReference type="PIR" id="S16602">
    <property type="entry name" value="S16602"/>
</dbReference>
<dbReference type="RefSeq" id="NP_001162991.1">
    <molecule id="P05661-20"/>
    <property type="nucleotide sequence ID" value="NM_001169520.3"/>
</dbReference>
<dbReference type="RefSeq" id="NP_523587.4">
    <molecule id="P05661-21"/>
    <property type="nucleotide sequence ID" value="NM_078863.6"/>
</dbReference>
<dbReference type="RefSeq" id="NP_723999.1">
    <molecule id="P05661-16"/>
    <property type="nucleotide sequence ID" value="NM_165181.3"/>
</dbReference>
<dbReference type="RefSeq" id="NP_724000.1">
    <molecule id="P05661-20"/>
    <property type="nucleotide sequence ID" value="NM_165182.3"/>
</dbReference>
<dbReference type="RefSeq" id="NP_724001.1">
    <molecule id="P05661-18"/>
    <property type="nucleotide sequence ID" value="NM_165183.3"/>
</dbReference>
<dbReference type="RefSeq" id="NP_724002.2">
    <molecule id="P05661-23"/>
    <property type="nucleotide sequence ID" value="NM_165184.3"/>
</dbReference>
<dbReference type="RefSeq" id="NP_724003.1">
    <molecule id="P05661-19"/>
    <property type="nucleotide sequence ID" value="NM_165185.3"/>
</dbReference>
<dbReference type="RefSeq" id="NP_724004.1">
    <molecule id="P05661-17"/>
    <property type="nucleotide sequence ID" value="NM_165186.3"/>
</dbReference>
<dbReference type="RefSeq" id="NP_724005.1">
    <molecule id="P05661-3"/>
    <property type="nucleotide sequence ID" value="NM_165187.3"/>
</dbReference>
<dbReference type="RefSeq" id="NP_724006.1">
    <molecule id="P05661-22"/>
    <property type="nucleotide sequence ID" value="NM_165188.3"/>
</dbReference>
<dbReference type="RefSeq" id="NP_724007.1">
    <molecule id="P05661-2"/>
    <property type="nucleotide sequence ID" value="NM_165189.3"/>
</dbReference>
<dbReference type="RefSeq" id="NP_724008.1">
    <molecule id="P05661-24"/>
    <property type="nucleotide sequence ID" value="NM_165190.4"/>
</dbReference>
<dbReference type="RefSeq" id="NP_724009.1">
    <molecule id="P05661-25"/>
    <property type="nucleotide sequence ID" value="NM_165191.3"/>
</dbReference>
<dbReference type="RefSeq" id="NP_724010.1">
    <molecule id="P05661-26"/>
    <property type="nucleotide sequence ID" value="NM_165192.4"/>
</dbReference>
<dbReference type="PDB" id="5W1A">
    <property type="method" value="X-ray"/>
    <property type="resolution" value="2.23 A"/>
    <property type="chains" value="A/C=1-810, A/C=2-805"/>
</dbReference>
<dbReference type="PDB" id="8EXW">
    <property type="method" value="X-ray"/>
    <property type="resolution" value="2.50 A"/>
    <property type="chains" value="A=2-809"/>
</dbReference>
<dbReference type="PDBsum" id="5W1A"/>
<dbReference type="PDBsum" id="8EXW"/>
<dbReference type="EMDB" id="EMD-42024"/>
<dbReference type="EMDB" id="EMD-47368"/>
<dbReference type="EMDB" id="EMD-47369"/>
<dbReference type="SMR" id="P05661"/>
<dbReference type="BioGRID" id="61014">
    <property type="interactions" value="60"/>
</dbReference>
<dbReference type="FunCoup" id="P05661">
    <property type="interactions" value="35"/>
</dbReference>
<dbReference type="IntAct" id="P05661">
    <property type="interactions" value="89"/>
</dbReference>
<dbReference type="MINT" id="P05661"/>
<dbReference type="STRING" id="7227.FBpp0291042"/>
<dbReference type="PaxDb" id="7227-FBpp0080452"/>
<dbReference type="PeptideAtlas" id="P05661"/>
<dbReference type="EnsemblMetazoa" id="FBtr0080895">
    <molecule id="P05661-20"/>
    <property type="protein sequence ID" value="FBpp0080452"/>
    <property type="gene ID" value="FBgn0264695"/>
</dbReference>
<dbReference type="EnsemblMetazoa" id="FBtr0080896">
    <molecule id="P05661-3"/>
    <property type="protein sequence ID" value="FBpp0080453"/>
    <property type="gene ID" value="FBgn0264695"/>
</dbReference>
<dbReference type="EnsemblMetazoa" id="FBtr0080897">
    <molecule id="P05661-2"/>
    <property type="protein sequence ID" value="FBpp0080454"/>
    <property type="gene ID" value="FBgn0264695"/>
</dbReference>
<dbReference type="EnsemblMetazoa" id="FBtr0080898">
    <molecule id="P05661-16"/>
    <property type="protein sequence ID" value="FBpp0080455"/>
    <property type="gene ID" value="FBgn0264695"/>
</dbReference>
<dbReference type="EnsemblMetazoa" id="FBtr0080899">
    <molecule id="P05661-18"/>
    <property type="protein sequence ID" value="FBpp0080456"/>
    <property type="gene ID" value="FBgn0264695"/>
</dbReference>
<dbReference type="EnsemblMetazoa" id="FBtr0080900">
    <molecule id="P05661-17"/>
    <property type="protein sequence ID" value="FBpp0080457"/>
    <property type="gene ID" value="FBgn0264695"/>
</dbReference>
<dbReference type="EnsemblMetazoa" id="FBtr0080901">
    <molecule id="P05661-19"/>
    <property type="protein sequence ID" value="FBpp0080458"/>
    <property type="gene ID" value="FBgn0264695"/>
</dbReference>
<dbReference type="EnsemblMetazoa" id="FBtr0080902">
    <molecule id="P05661-21"/>
    <property type="protein sequence ID" value="FBpp0080459"/>
    <property type="gene ID" value="FBgn0264695"/>
</dbReference>
<dbReference type="EnsemblMetazoa" id="FBtr0080903">
    <molecule id="P05661-22"/>
    <property type="protein sequence ID" value="FBpp0080460"/>
    <property type="gene ID" value="FBgn0264695"/>
</dbReference>
<dbReference type="EnsemblMetazoa" id="FBtr0080905">
    <molecule id="P05661-25"/>
    <property type="protein sequence ID" value="FBpp0080462"/>
    <property type="gene ID" value="FBgn0264695"/>
</dbReference>
<dbReference type="EnsemblMetazoa" id="FBtr0080906">
    <molecule id="P05661-24"/>
    <property type="protein sequence ID" value="FBpp0080463"/>
    <property type="gene ID" value="FBgn0264695"/>
</dbReference>
<dbReference type="EnsemblMetazoa" id="FBtr0080907">
    <molecule id="P05661-26"/>
    <property type="protein sequence ID" value="FBpp0080464"/>
    <property type="gene ID" value="FBgn0264695"/>
</dbReference>
<dbReference type="EnsemblMetazoa" id="FBtr0301828">
    <molecule id="P05661-20"/>
    <property type="protein sequence ID" value="FBpp0291042"/>
    <property type="gene ID" value="FBgn0264695"/>
</dbReference>
<dbReference type="EnsemblMetazoa" id="FBtr0307492">
    <molecule id="P05661-23"/>
    <property type="protein sequence ID" value="FBpp0298827"/>
    <property type="gene ID" value="FBgn0264695"/>
</dbReference>
<dbReference type="GeneID" id="35007"/>
<dbReference type="KEGG" id="dme:Dmel_CG17927"/>
<dbReference type="AGR" id="FB:FBgn0264695"/>
<dbReference type="CTD" id="35007"/>
<dbReference type="FlyBase" id="FBgn0264695">
    <property type="gene designation" value="Mhc"/>
</dbReference>
<dbReference type="VEuPathDB" id="VectorBase:FBgn0264695"/>
<dbReference type="eggNOG" id="KOG0161">
    <property type="taxonomic scope" value="Eukaryota"/>
</dbReference>
<dbReference type="GeneTree" id="ENSGT00940000175738"/>
<dbReference type="InParanoid" id="P05661"/>
<dbReference type="OMA" id="RCYFASK"/>
<dbReference type="OrthoDB" id="6108017at2759"/>
<dbReference type="PhylomeDB" id="P05661"/>
<dbReference type="SignaLink" id="P05661"/>
<dbReference type="BioGRID-ORCS" id="35007">
    <property type="hits" value="0 hits in 3 CRISPR screens"/>
</dbReference>
<dbReference type="ChiTaRS" id="Mhc">
    <property type="organism name" value="fly"/>
</dbReference>
<dbReference type="GenomeRNAi" id="35007"/>
<dbReference type="PRO" id="PR:P05661"/>
<dbReference type="Proteomes" id="UP000000803">
    <property type="component" value="Chromosome 2L"/>
</dbReference>
<dbReference type="Bgee" id="FBgn0264695">
    <property type="expression patterns" value="Expressed in crop (Drosophila) and 186 other cell types or tissues"/>
</dbReference>
<dbReference type="ExpressionAtlas" id="P05661">
    <property type="expression patterns" value="baseline and differential"/>
</dbReference>
<dbReference type="GO" id="GO:0031672">
    <property type="term" value="C:A band"/>
    <property type="evidence" value="ECO:0000314"/>
    <property type="project" value="FlyBase"/>
</dbReference>
<dbReference type="GO" id="GO:0005737">
    <property type="term" value="C:cytoplasm"/>
    <property type="evidence" value="ECO:0000318"/>
    <property type="project" value="GO_Central"/>
</dbReference>
<dbReference type="GO" id="GO:0032982">
    <property type="term" value="C:myosin filament"/>
    <property type="evidence" value="ECO:0000318"/>
    <property type="project" value="GO_Central"/>
</dbReference>
<dbReference type="GO" id="GO:0016460">
    <property type="term" value="C:myosin II complex"/>
    <property type="evidence" value="ECO:0000318"/>
    <property type="project" value="GO_Central"/>
</dbReference>
<dbReference type="GO" id="GO:0005703">
    <property type="term" value="C:polytene chromosome puff"/>
    <property type="evidence" value="ECO:0000314"/>
    <property type="project" value="FlyBase"/>
</dbReference>
<dbReference type="GO" id="GO:0030017">
    <property type="term" value="C:sarcomere"/>
    <property type="evidence" value="ECO:0000314"/>
    <property type="project" value="FlyBase"/>
</dbReference>
<dbReference type="GO" id="GO:0005863">
    <property type="term" value="C:striated muscle myosin thick filament"/>
    <property type="evidence" value="ECO:0007005"/>
    <property type="project" value="FlyBase"/>
</dbReference>
<dbReference type="GO" id="GO:0051015">
    <property type="term" value="F:actin filament binding"/>
    <property type="evidence" value="ECO:0000318"/>
    <property type="project" value="GO_Central"/>
</dbReference>
<dbReference type="GO" id="GO:0005524">
    <property type="term" value="F:ATP binding"/>
    <property type="evidence" value="ECO:0007669"/>
    <property type="project" value="UniProtKB-KW"/>
</dbReference>
<dbReference type="GO" id="GO:0005516">
    <property type="term" value="F:calmodulin binding"/>
    <property type="evidence" value="ECO:0007669"/>
    <property type="project" value="UniProtKB-KW"/>
</dbReference>
<dbReference type="GO" id="GO:0000146">
    <property type="term" value="F:microfilament motor activity"/>
    <property type="evidence" value="ECO:0000314"/>
    <property type="project" value="FlyBase"/>
</dbReference>
<dbReference type="GO" id="GO:0042803">
    <property type="term" value="F:protein homodimerization activity"/>
    <property type="evidence" value="ECO:0000314"/>
    <property type="project" value="FlyBase"/>
</dbReference>
<dbReference type="GO" id="GO:0008307">
    <property type="term" value="F:structural constituent of muscle"/>
    <property type="evidence" value="ECO:0000315"/>
    <property type="project" value="FlyBase"/>
</dbReference>
<dbReference type="GO" id="GO:0007527">
    <property type="term" value="P:adult somatic muscle development"/>
    <property type="evidence" value="ECO:0000315"/>
    <property type="project" value="FlyBase"/>
</dbReference>
<dbReference type="GO" id="GO:0007298">
    <property type="term" value="P:border follicle cell migration"/>
    <property type="evidence" value="ECO:0000315"/>
    <property type="project" value="FlyBase"/>
</dbReference>
<dbReference type="GO" id="GO:0007427">
    <property type="term" value="P:epithelial cell migration, open tracheal system"/>
    <property type="evidence" value="ECO:0000315"/>
    <property type="project" value="FlyBase"/>
</dbReference>
<dbReference type="GO" id="GO:0060361">
    <property type="term" value="P:flight"/>
    <property type="evidence" value="ECO:0000315"/>
    <property type="project" value="FlyBase"/>
</dbReference>
<dbReference type="GO" id="GO:0040011">
    <property type="term" value="P:locomotion"/>
    <property type="evidence" value="ECO:0000315"/>
    <property type="project" value="FlyBase"/>
</dbReference>
<dbReference type="GO" id="GO:0042692">
    <property type="term" value="P:muscle cell differentiation"/>
    <property type="evidence" value="ECO:0000315"/>
    <property type="project" value="FlyBase"/>
</dbReference>
<dbReference type="GO" id="GO:0006936">
    <property type="term" value="P:muscle contraction"/>
    <property type="evidence" value="ECO:0000315"/>
    <property type="project" value="FlyBase"/>
</dbReference>
<dbReference type="GO" id="GO:0007517">
    <property type="term" value="P:muscle organ development"/>
    <property type="evidence" value="ECO:0000315"/>
    <property type="project" value="FlyBase"/>
</dbReference>
<dbReference type="GO" id="GO:0071689">
    <property type="term" value="P:muscle thin filament assembly"/>
    <property type="evidence" value="ECO:0000315"/>
    <property type="project" value="FlyBase"/>
</dbReference>
<dbReference type="GO" id="GO:0030239">
    <property type="term" value="P:myofibril assembly"/>
    <property type="evidence" value="ECO:0000315"/>
    <property type="project" value="FlyBase"/>
</dbReference>
<dbReference type="GO" id="GO:0031033">
    <property type="term" value="P:myosin filament organization"/>
    <property type="evidence" value="ECO:0000315"/>
    <property type="project" value="FlyBase"/>
</dbReference>
<dbReference type="GO" id="GO:0050821">
    <property type="term" value="P:protein stabilization"/>
    <property type="evidence" value="ECO:0000315"/>
    <property type="project" value="FlyBase"/>
</dbReference>
<dbReference type="GO" id="GO:0043520">
    <property type="term" value="P:regulation of myosin II filament assembly"/>
    <property type="evidence" value="ECO:0000314"/>
    <property type="project" value="FlyBase"/>
</dbReference>
<dbReference type="GO" id="GO:0045214">
    <property type="term" value="P:sarcomere organization"/>
    <property type="evidence" value="ECO:0000315"/>
    <property type="project" value="FlyBase"/>
</dbReference>
<dbReference type="CDD" id="cd14909">
    <property type="entry name" value="MYSc_Myh1_insects_crustaceans"/>
    <property type="match status" value="1"/>
</dbReference>
<dbReference type="FunFam" id="1.10.10.820:FF:000001">
    <property type="entry name" value="Myosin heavy chain"/>
    <property type="match status" value="1"/>
</dbReference>
<dbReference type="FunFam" id="1.20.5.340:FF:000036">
    <property type="entry name" value="Myosin heavy chain"/>
    <property type="match status" value="1"/>
</dbReference>
<dbReference type="FunFam" id="1.20.5.370:FF:000001">
    <property type="entry name" value="Myosin heavy chain"/>
    <property type="match status" value="1"/>
</dbReference>
<dbReference type="FunFam" id="1.20.5.370:FF:000008">
    <property type="entry name" value="Myosin heavy chain"/>
    <property type="match status" value="1"/>
</dbReference>
<dbReference type="FunFam" id="1.20.58.530:FF:000001">
    <property type="entry name" value="Myosin heavy chain"/>
    <property type="match status" value="1"/>
</dbReference>
<dbReference type="FunFam" id="2.30.30.360:FF:000001">
    <property type="entry name" value="Myosin heavy chain"/>
    <property type="match status" value="1"/>
</dbReference>
<dbReference type="FunFam" id="1.20.5.4820:FF:000002">
    <property type="entry name" value="Myosin heavy chain 10"/>
    <property type="match status" value="1"/>
</dbReference>
<dbReference type="FunFam" id="1.20.5.340:FF:000038">
    <property type="entry name" value="Myosin heavy chain muscle"/>
    <property type="match status" value="1"/>
</dbReference>
<dbReference type="FunFam" id="1.20.5.340:FF:000019">
    <property type="entry name" value="Myosin heavy chain, isoform G"/>
    <property type="match status" value="1"/>
</dbReference>
<dbReference type="FunFam" id="1.20.5.340:FF:000021">
    <property type="entry name" value="Myosin heavy chain, isoform G"/>
    <property type="match status" value="1"/>
</dbReference>
<dbReference type="FunFam" id="1.20.5.340:FF:000025">
    <property type="entry name" value="Myosin heavy chain, isoform G"/>
    <property type="match status" value="1"/>
</dbReference>
<dbReference type="FunFam" id="1.20.5.370:FF:000009">
    <property type="entry name" value="Myosin heavy chain, isoform G"/>
    <property type="match status" value="1"/>
</dbReference>
<dbReference type="FunFam" id="1.20.5.370:FF:000010">
    <property type="entry name" value="Myosin heavy chain, isoform G"/>
    <property type="match status" value="1"/>
</dbReference>
<dbReference type="FunFam" id="1.20.5.370:FF:000005">
    <property type="entry name" value="Myosin heavy chain, isoform I"/>
    <property type="match status" value="1"/>
</dbReference>
<dbReference type="FunFam" id="3.40.850.10:FF:000024">
    <property type="entry name" value="Myosin heavy chain, isoform J"/>
    <property type="match status" value="1"/>
</dbReference>
<dbReference type="FunFam" id="1.20.120.720:FF:000001">
    <property type="entry name" value="Myosin heavy chain, muscle"/>
    <property type="match status" value="1"/>
</dbReference>
<dbReference type="Gene3D" id="1.10.10.820">
    <property type="match status" value="1"/>
</dbReference>
<dbReference type="Gene3D" id="1.20.5.340">
    <property type="match status" value="4"/>
</dbReference>
<dbReference type="Gene3D" id="1.20.5.370">
    <property type="match status" value="4"/>
</dbReference>
<dbReference type="Gene3D" id="1.20.5.4820">
    <property type="match status" value="1"/>
</dbReference>
<dbReference type="Gene3D" id="1.20.58.530">
    <property type="match status" value="1"/>
</dbReference>
<dbReference type="Gene3D" id="3.40.850.10">
    <property type="entry name" value="Kinesin motor domain"/>
    <property type="match status" value="1"/>
</dbReference>
<dbReference type="Gene3D" id="2.30.30.360">
    <property type="entry name" value="Myosin S1 fragment, N-terminal"/>
    <property type="match status" value="1"/>
</dbReference>
<dbReference type="Gene3D" id="1.20.120.720">
    <property type="entry name" value="Myosin VI head, motor domain, U50 subdomain"/>
    <property type="match status" value="1"/>
</dbReference>
<dbReference type="InterPro" id="IPR036961">
    <property type="entry name" value="Kinesin_motor_dom_sf"/>
</dbReference>
<dbReference type="InterPro" id="IPR001609">
    <property type="entry name" value="Myosin_head_motor_dom-like"/>
</dbReference>
<dbReference type="InterPro" id="IPR004009">
    <property type="entry name" value="Myosin_N"/>
</dbReference>
<dbReference type="InterPro" id="IPR008989">
    <property type="entry name" value="Myosin_S1_N"/>
</dbReference>
<dbReference type="InterPro" id="IPR002928">
    <property type="entry name" value="Myosin_tail"/>
</dbReference>
<dbReference type="InterPro" id="IPR027417">
    <property type="entry name" value="P-loop_NTPase"/>
</dbReference>
<dbReference type="InterPro" id="IPR014751">
    <property type="entry name" value="XRCC4-like_C"/>
</dbReference>
<dbReference type="PANTHER" id="PTHR45615:SF27">
    <property type="entry name" value="MYOSIN HEAVY CHAIN, MUSCLE"/>
    <property type="match status" value="1"/>
</dbReference>
<dbReference type="PANTHER" id="PTHR45615">
    <property type="entry name" value="MYOSIN HEAVY CHAIN, NON-MUSCLE"/>
    <property type="match status" value="1"/>
</dbReference>
<dbReference type="Pfam" id="PF00063">
    <property type="entry name" value="Myosin_head"/>
    <property type="match status" value="1"/>
</dbReference>
<dbReference type="Pfam" id="PF02736">
    <property type="entry name" value="Myosin_N"/>
    <property type="match status" value="1"/>
</dbReference>
<dbReference type="Pfam" id="PF01576">
    <property type="entry name" value="Myosin_tail_1"/>
    <property type="match status" value="1"/>
</dbReference>
<dbReference type="PRINTS" id="PR00193">
    <property type="entry name" value="MYOSINHEAVY"/>
</dbReference>
<dbReference type="SMART" id="SM00242">
    <property type="entry name" value="MYSc"/>
    <property type="match status" value="1"/>
</dbReference>
<dbReference type="SUPFAM" id="SSF90257">
    <property type="entry name" value="Myosin rod fragments"/>
    <property type="match status" value="5"/>
</dbReference>
<dbReference type="SUPFAM" id="SSF52540">
    <property type="entry name" value="P-loop containing nucleoside triphosphate hydrolases"/>
    <property type="match status" value="1"/>
</dbReference>
<dbReference type="PROSITE" id="PS50096">
    <property type="entry name" value="IQ"/>
    <property type="match status" value="1"/>
</dbReference>
<dbReference type="PROSITE" id="PS51456">
    <property type="entry name" value="MYOSIN_MOTOR"/>
    <property type="match status" value="1"/>
</dbReference>
<dbReference type="PROSITE" id="PS51844">
    <property type="entry name" value="SH3_LIKE"/>
    <property type="match status" value="1"/>
</dbReference>
<feature type="chain" id="PRO_0000123387" description="Myosin heavy chain, muscle">
    <location>
        <begin position="1"/>
        <end position="1962"/>
    </location>
</feature>
<feature type="domain" description="Myosin N-terminal SH3-like" evidence="5">
    <location>
        <begin position="33"/>
        <end position="82"/>
    </location>
</feature>
<feature type="domain" description="Myosin motor" evidence="4">
    <location>
        <begin position="86"/>
        <end position="777"/>
    </location>
</feature>
<feature type="domain" description="IQ" evidence="3">
    <location>
        <begin position="780"/>
        <end position="809"/>
    </location>
</feature>
<feature type="region of interest" description="Actin-binding" evidence="4">
    <location>
        <begin position="656"/>
        <end position="678"/>
    </location>
</feature>
<feature type="region of interest" description="Disordered" evidence="6">
    <location>
        <begin position="1822"/>
        <end position="1862"/>
    </location>
</feature>
<feature type="region of interest" description="Disordered" evidence="6">
    <location>
        <begin position="1922"/>
        <end position="1962"/>
    </location>
</feature>
<feature type="coiled-coil region" evidence="2">
    <location>
        <begin position="802"/>
        <end position="1927"/>
    </location>
</feature>
<feature type="binding site" evidence="1">
    <location>
        <begin position="179"/>
        <end position="186"/>
    </location>
    <ligand>
        <name>ATP</name>
        <dbReference type="ChEBI" id="CHEBI:30616"/>
    </ligand>
</feature>
<feature type="splice variant" id="VSP_003329" description="In isoform 3b, isoform BDBBA, isoform BABDB, isoform D, isoform F, isoform H, isoform I, isoform K, isoform L and isoform M." evidence="8">
    <original>VRDIKSEKVEKVNPPKFEKIEDMADMTVLNTPCVLHNLRQRYYAKLIY</original>
    <variation>TRDLKKDLLQQVNPPKYEKAEDMSNLTYLNDASVLHNLRQRYYNKLIY</variation>
    <location>
        <begin position="69"/>
        <end position="116"/>
    </location>
</feature>
<feature type="splice variant" id="VSP_003330" description="In isoform 7b and isoform Q." evidence="8">
    <original>DICLLTDNIYDYHIVSQGKVTVASIDDAEEFSLTD</original>
    <variation>EYCLLSNNIYDYRIVSQGKTTIPSVNDGEEWVAVD</variation>
    <location>
        <begin position="298"/>
        <end position="332"/>
    </location>
</feature>
<feature type="splice variant" id="VSP_003331" description="In isoform 7c." evidence="8">
    <original>DICLLTDNIYDYHIVSQGKVTVASIDDAEEFSLTD</original>
    <variation>EMVFLGQHIGDYPGICQGKTRIPGVNDGEEFELTD</variation>
    <location>
        <begin position="298"/>
        <end position="332"/>
    </location>
</feature>
<feature type="splice variant" id="VSP_003332" description="In isoform 7d, isoform BDBBA, isoform K, isoform L and isoform M." evidence="8">
    <original>DICLLTDNIYDYHIVSQGKVTVASIDDAEEFSLTD</original>
    <variation>EMCFLSDNIYDYYNVSQGKVTVPNMDDGEEFQLAD</variation>
    <location>
        <begin position="298"/>
        <end position="332"/>
    </location>
</feature>
<feature type="splice variant" id="VSP_003333" description="In isoform 9b, isoform BDBBA, isoform BABDB, isoform C, isoform D, isoform F, isoform G, isoform Q and isoform M." evidence="8">
    <original>YNGFEQLCINFTNEKLQQFFNHIMFVMEQEEYKKEGINWDFIDFGMDLLACIDLIEK</original>
    <variation>YNGFEQLCINFTNEKLQQFFNHHMFVLEQEEYKREGIDWAFIDFGMDLLACIDLIEK</variation>
    <location>
        <begin position="469"/>
        <end position="525"/>
    </location>
</feature>
<feature type="splice variant" id="VSP_003334" description="In isoform 9c, isoform E, isoform H and isoform I." evidence="8">
    <original>YNGFEQLCINFTNEKLQQFFNHIMFVMEQEEYKKEGINWDFIDFGMDLLACIDLIEK</original>
    <variation>YNGFEQLCINFTNEKLQQFFNHHMFVLEQEEYQREGIEWTFIDFGMDLQLCIDLIEK</variation>
    <location>
        <begin position="469"/>
        <end position="525"/>
    </location>
</feature>
<feature type="splice variant" id="VSP_003335" description="In isoform 11b, isoform BDBBA, isoform L and isoform M." evidence="8">
    <original>YQILNPRGIKDLDCPKKASKVLIESTELNEDLYRLGHTK</original>
    <variation>YQILNPAGIVGVDDPKKCGSIILESTALDPDMYRIGHTK</variation>
    <location>
        <begin position="723"/>
        <end position="761"/>
    </location>
</feature>
<feature type="splice variant" id="VSP_003336" description="In isoform 11c, isoform C, isoform D and isoform I." evidence="8">
    <original>YQILNPRGIKDLDCPKKASKVLIESTELNEDLYRLGHTK</original>
    <variation>YQILNPKGIKGIEDPKKCTKVLIESTELNDDQYRLGNTK</variation>
    <location>
        <begin position="723"/>
        <end position="761"/>
    </location>
</feature>
<feature type="splice variant" id="VSP_003337" description="In isoform 11d, isoform BABDB, isoform E, isoform G, isoform H and isoform Q." evidence="8">
    <original>YQILNPRGIKDLDCPKKASKVLIESTELNEDLYRLGHTK</original>
    <variation>YKIMCPKLLQGVEKDKKATEIIIKFIDLPEDQYRLGNTK</variation>
    <location>
        <begin position="723"/>
        <end position="761"/>
    </location>
</feature>
<feature type="splice variant" id="VSP_003338" description="In isoform 11e and isoform K." evidence="8">
    <original>YQILNPRGIKDLDCPKKASKVLIESTELNEDLYRLGHTK</original>
    <variation>YMILAPAIMAAEKVAKNAAGKCLEAVGLDPDMYRIGHTK</variation>
    <location>
        <begin position="723"/>
        <end position="761"/>
    </location>
</feature>
<feature type="splice variant" id="VSP_003339" description="In isoform 15b, isoform BABDB, isoform C, isoform D, isoform E, isoform F, isoform G, isoform H, isoform I and isoform Q." evidence="8">
    <original>AEHDRQTCHNELNQTRTACDQLGRDK</original>
    <variation>AEKEKNEYYGQLNDLRAGVDHITNEK</variation>
    <location>
        <begin position="1216"/>
        <end position="1241"/>
    </location>
</feature>
<feature type="splice variant" id="VSP_003340" description="In isoform 18, isoform K, isoform L and isoform M." evidence="8">
    <original>P</original>
    <variation>I</variation>
    <location>
        <position position="1936"/>
    </location>
</feature>
<feature type="splice variant" id="VSP_003341" description="In isoform 18, isoform K, isoform L and isoform M." evidence="8">
    <location>
        <begin position="1937"/>
        <end position="1962"/>
    </location>
</feature>
<feature type="sequence conflict" description="In Ref. 5; AAA28706/AAA28707." evidence="8" ref="5">
    <original>EK</original>
    <variation>RE</variation>
    <location>
        <begin position="43"/>
        <end position="44"/>
    </location>
</feature>
<feature type="sequence conflict" description="In Ref. 5; AAA28706/AAA28707." evidence="8" ref="5">
    <original>E</original>
    <variation>K</variation>
    <location>
        <position position="68"/>
    </location>
</feature>
<feature type="sequence conflict" description="In Ref. 5; AAA28706/AAA28707." evidence="8" ref="5">
    <original>L</original>
    <variation>M</variation>
    <location>
        <position position="215"/>
    </location>
</feature>
<feature type="sequence conflict" description="In Ref. 1; AAA28686/AAA28687." evidence="8" ref="1">
    <original>S</original>
    <variation>C</variation>
    <location>
        <position position="281"/>
    </location>
</feature>
<feature type="sequence conflict" description="In Ref. 8; AA sequence." evidence="8" ref="8">
    <original>K</original>
    <variation>KFRAK</variation>
    <location>
        <position position="1922"/>
    </location>
</feature>
<feature type="sequence conflict" description="In Ref. 8; AA sequence." evidence="8" ref="8">
    <original>SPAPRA</original>
    <variation>GPAVSY</variation>
    <location>
        <begin position="1933"/>
        <end position="1938"/>
    </location>
</feature>
<feature type="helix" evidence="9">
    <location>
        <begin position="14"/>
        <end position="16"/>
    </location>
</feature>
<feature type="helix" evidence="9">
    <location>
        <begin position="21"/>
        <end position="28"/>
    </location>
</feature>
<feature type="turn" evidence="9">
    <location>
        <begin position="34"/>
        <end position="36"/>
    </location>
</feature>
<feature type="strand" evidence="9">
    <location>
        <begin position="37"/>
        <end position="42"/>
    </location>
</feature>
<feature type="turn" evidence="9">
    <location>
        <begin position="43"/>
        <end position="45"/>
    </location>
</feature>
<feature type="strand" evidence="9">
    <location>
        <begin position="46"/>
        <end position="56"/>
    </location>
</feature>
<feature type="strand" evidence="9">
    <location>
        <begin position="59"/>
        <end position="63"/>
    </location>
</feature>
<feature type="strand" evidence="9">
    <location>
        <begin position="69"/>
        <end position="73"/>
    </location>
</feature>
<feature type="helix" evidence="9">
    <location>
        <begin position="74"/>
        <end position="76"/>
    </location>
</feature>
<feature type="helix" evidence="9">
    <location>
        <begin position="83"/>
        <end position="85"/>
    </location>
</feature>
<feature type="helix" evidence="9">
    <location>
        <begin position="91"/>
        <end position="93"/>
    </location>
</feature>
<feature type="helix" evidence="9">
    <location>
        <begin position="99"/>
        <end position="111"/>
    </location>
</feature>
<feature type="strand" evidence="9">
    <location>
        <begin position="116"/>
        <end position="119"/>
    </location>
</feature>
<feature type="strand" evidence="9">
    <location>
        <begin position="122"/>
        <end position="126"/>
    </location>
</feature>
<feature type="helix" evidence="9">
    <location>
        <begin position="137"/>
        <end position="142"/>
    </location>
</feature>
<feature type="turn" evidence="9">
    <location>
        <begin position="143"/>
        <end position="145"/>
    </location>
</feature>
<feature type="helix" evidence="9">
    <location>
        <begin position="148"/>
        <end position="150"/>
    </location>
</feature>
<feature type="helix" evidence="9">
    <location>
        <begin position="155"/>
        <end position="169"/>
    </location>
</feature>
<feature type="strand" evidence="9">
    <location>
        <begin position="173"/>
        <end position="178"/>
    </location>
</feature>
<feature type="helix" evidence="9">
    <location>
        <begin position="185"/>
        <end position="199"/>
    </location>
</feature>
<feature type="helix" evidence="9">
    <location>
        <begin position="203"/>
        <end position="208"/>
    </location>
</feature>
<feature type="turn" evidence="9">
    <location>
        <begin position="209"/>
        <end position="212"/>
    </location>
</feature>
<feature type="helix" evidence="9">
    <location>
        <begin position="215"/>
        <end position="220"/>
    </location>
</feature>
<feature type="helix" evidence="9">
    <location>
        <begin position="223"/>
        <end position="230"/>
    </location>
</feature>
<feature type="strand" evidence="9">
    <location>
        <begin position="231"/>
        <end position="234"/>
    </location>
</feature>
<feature type="strand" evidence="9">
    <location>
        <begin position="237"/>
        <end position="241"/>
    </location>
</feature>
<feature type="strand" evidence="9">
    <location>
        <begin position="243"/>
        <end position="251"/>
    </location>
</feature>
<feature type="strand" evidence="9">
    <location>
        <begin position="257"/>
        <end position="265"/>
    </location>
</feature>
<feature type="helix" evidence="9">
    <location>
        <begin position="269"/>
        <end position="272"/>
    </location>
</feature>
<feature type="helix" evidence="9">
    <location>
        <begin position="283"/>
        <end position="289"/>
    </location>
</feature>
<feature type="helix" evidence="9">
    <location>
        <begin position="296"/>
        <end position="300"/>
    </location>
</feature>
<feature type="helix" evidence="9">
    <location>
        <begin position="306"/>
        <end position="308"/>
    </location>
</feature>
<feature type="helix" evidence="9">
    <location>
        <begin position="310"/>
        <end position="312"/>
    </location>
</feature>
<feature type="helix" evidence="9">
    <location>
        <begin position="324"/>
        <end position="337"/>
    </location>
</feature>
<feature type="helix" evidence="9">
    <location>
        <begin position="342"/>
        <end position="359"/>
    </location>
</feature>
<feature type="strand" evidence="9">
    <location>
        <begin position="373"/>
        <end position="375"/>
    </location>
</feature>
<feature type="helix" evidence="9">
    <location>
        <begin position="378"/>
        <end position="387"/>
    </location>
</feature>
<feature type="helix" evidence="9">
    <location>
        <begin position="391"/>
        <end position="399"/>
    </location>
</feature>
<feature type="strand" evidence="9">
    <location>
        <begin position="402"/>
        <end position="404"/>
    </location>
</feature>
<feature type="strand" evidence="9">
    <location>
        <begin position="406"/>
        <end position="411"/>
    </location>
</feature>
<feature type="helix" evidence="9">
    <location>
        <begin position="416"/>
        <end position="446"/>
    </location>
</feature>
<feature type="strand" evidence="9">
    <location>
        <begin position="454"/>
        <end position="460"/>
    </location>
</feature>
<feature type="helix" evidence="9">
    <location>
        <begin position="472"/>
        <end position="503"/>
    </location>
</feature>
<feature type="helix" evidence="9">
    <location>
        <begin position="512"/>
        <end position="516"/>
    </location>
</feature>
<feature type="helix" evidence="9">
    <location>
        <begin position="517"/>
        <end position="524"/>
    </location>
</feature>
<feature type="helix" evidence="9">
    <location>
        <begin position="529"/>
        <end position="536"/>
    </location>
</feature>
<feature type="helix" evidence="9">
    <location>
        <begin position="544"/>
        <end position="555"/>
    </location>
</feature>
<feature type="turn" evidence="9">
    <location>
        <begin position="556"/>
        <end position="558"/>
    </location>
</feature>
<feature type="turn" evidence="9">
    <location>
        <begin position="570"/>
        <end position="573"/>
    </location>
</feature>
<feature type="strand" evidence="9">
    <location>
        <begin position="576"/>
        <end position="581"/>
    </location>
</feature>
<feature type="strand" evidence="9">
    <location>
        <begin position="584"/>
        <end position="588"/>
    </location>
</feature>
<feature type="helix" evidence="9">
    <location>
        <begin position="593"/>
        <end position="597"/>
    </location>
</feature>
<feature type="helix" evidence="9">
    <location>
        <begin position="603"/>
        <end position="610"/>
    </location>
</feature>
<feature type="helix" evidence="9">
    <location>
        <begin position="615"/>
        <end position="620"/>
    </location>
</feature>
<feature type="turn" evidence="9">
    <location>
        <begin position="621"/>
        <end position="623"/>
    </location>
</feature>
<feature type="helix" evidence="9">
    <location>
        <begin position="648"/>
        <end position="664"/>
    </location>
</feature>
<feature type="strand" evidence="9">
    <location>
        <begin position="666"/>
        <end position="674"/>
    </location>
</feature>
<feature type="helix" evidence="9">
    <location>
        <begin position="687"/>
        <end position="696"/>
    </location>
</feature>
<feature type="helix" evidence="9">
    <location>
        <begin position="699"/>
        <end position="706"/>
    </location>
</feature>
<feature type="strand" evidence="9">
    <location>
        <begin position="712"/>
        <end position="715"/>
    </location>
</feature>
<feature type="helix" evidence="9">
    <location>
        <begin position="716"/>
        <end position="723"/>
    </location>
</feature>
<feature type="helix" evidence="9">
    <location>
        <begin position="724"/>
        <end position="726"/>
    </location>
</feature>
<feature type="turn" evidence="9">
    <location>
        <begin position="728"/>
        <end position="733"/>
    </location>
</feature>
<feature type="helix" evidence="9">
    <location>
        <begin position="737"/>
        <end position="746"/>
    </location>
</feature>
<feature type="helix" evidence="9">
    <location>
        <begin position="752"/>
        <end position="754"/>
    </location>
</feature>
<feature type="strand" evidence="9">
    <location>
        <begin position="755"/>
        <end position="757"/>
    </location>
</feature>
<feature type="strand" evidence="9">
    <location>
        <begin position="759"/>
        <end position="764"/>
    </location>
</feature>
<feature type="helix" evidence="9">
    <location>
        <begin position="768"/>
        <end position="806"/>
    </location>
</feature>
<reference key="1">
    <citation type="journal article" date="1989" name="Mol. Cell. Biol.">
        <title>Functional domains of the Drosophila melanogaster muscle myosin heavy-chain gene are encoded by alternatively spliced exons.</title>
        <authorList>
            <person name="George E.L."/>
            <person name="Ober M.B."/>
            <person name="Emerson C.P. Jr."/>
        </authorList>
    </citation>
    <scope>NUCLEOTIDE SEQUENCE [GENOMIC DNA]</scope>
    <scope>ALTERNATIVE SPLICING (ISOFORMS BDBBA AND BABDB)</scope>
    <source>
        <strain>Canton-S</strain>
        <tissue>Pupae</tissue>
    </source>
</reference>
<reference key="2">
    <citation type="journal article" date="1990" name="Genes Dev.">
        <title>Alternative myosin hinge regions are utilized in a tissue-specific fashion that correlates with muscle contraction speed.</title>
        <authorList>
            <person name="Collier V.L."/>
            <person name="Kronert W.A."/>
            <person name="O'Donnell P.T."/>
            <person name="Edwards K.A."/>
            <person name="Bernstein S.I."/>
        </authorList>
    </citation>
    <scope>NUCLEOTIDE SEQUENCE [GENOMIC DNA] (ISOFORM M)</scope>
    <scope>NUCLEOTIDE SEQUENCE [GENOMIC DNA] OF 762-1962</scope>
    <scope>TISSUE SPECIFICITY</scope>
    <source>
        <strain>Canton-S</strain>
    </source>
</reference>
<reference key="3">
    <citation type="journal article" date="2000" name="Science">
        <title>The genome sequence of Drosophila melanogaster.</title>
        <authorList>
            <person name="Adams M.D."/>
            <person name="Celniker S.E."/>
            <person name="Holt R.A."/>
            <person name="Evans C.A."/>
            <person name="Gocayne J.D."/>
            <person name="Amanatides P.G."/>
            <person name="Scherer S.E."/>
            <person name="Li P.W."/>
            <person name="Hoskins R.A."/>
            <person name="Galle R.F."/>
            <person name="George R.A."/>
            <person name="Lewis S.E."/>
            <person name="Richards S."/>
            <person name="Ashburner M."/>
            <person name="Henderson S.N."/>
            <person name="Sutton G.G."/>
            <person name="Wortman J.R."/>
            <person name="Yandell M.D."/>
            <person name="Zhang Q."/>
            <person name="Chen L.X."/>
            <person name="Brandon R.C."/>
            <person name="Rogers Y.-H.C."/>
            <person name="Blazej R.G."/>
            <person name="Champe M."/>
            <person name="Pfeiffer B.D."/>
            <person name="Wan K.H."/>
            <person name="Doyle C."/>
            <person name="Baxter E.G."/>
            <person name="Helt G."/>
            <person name="Nelson C.R."/>
            <person name="Miklos G.L.G."/>
            <person name="Abril J.F."/>
            <person name="Agbayani A."/>
            <person name="An H.-J."/>
            <person name="Andrews-Pfannkoch C."/>
            <person name="Baldwin D."/>
            <person name="Ballew R.M."/>
            <person name="Basu A."/>
            <person name="Baxendale J."/>
            <person name="Bayraktaroglu L."/>
            <person name="Beasley E.M."/>
            <person name="Beeson K.Y."/>
            <person name="Benos P.V."/>
            <person name="Berman B.P."/>
            <person name="Bhandari D."/>
            <person name="Bolshakov S."/>
            <person name="Borkova D."/>
            <person name="Botchan M.R."/>
            <person name="Bouck J."/>
            <person name="Brokstein P."/>
            <person name="Brottier P."/>
            <person name="Burtis K.C."/>
            <person name="Busam D.A."/>
            <person name="Butler H."/>
            <person name="Cadieu E."/>
            <person name="Center A."/>
            <person name="Chandra I."/>
            <person name="Cherry J.M."/>
            <person name="Cawley S."/>
            <person name="Dahlke C."/>
            <person name="Davenport L.B."/>
            <person name="Davies P."/>
            <person name="de Pablos B."/>
            <person name="Delcher A."/>
            <person name="Deng Z."/>
            <person name="Mays A.D."/>
            <person name="Dew I."/>
            <person name="Dietz S.M."/>
            <person name="Dodson K."/>
            <person name="Doup L.E."/>
            <person name="Downes M."/>
            <person name="Dugan-Rocha S."/>
            <person name="Dunkov B.C."/>
            <person name="Dunn P."/>
            <person name="Durbin K.J."/>
            <person name="Evangelista C.C."/>
            <person name="Ferraz C."/>
            <person name="Ferriera S."/>
            <person name="Fleischmann W."/>
            <person name="Fosler C."/>
            <person name="Gabrielian A.E."/>
            <person name="Garg N.S."/>
            <person name="Gelbart W.M."/>
            <person name="Glasser K."/>
            <person name="Glodek A."/>
            <person name="Gong F."/>
            <person name="Gorrell J.H."/>
            <person name="Gu Z."/>
            <person name="Guan P."/>
            <person name="Harris M."/>
            <person name="Harris N.L."/>
            <person name="Harvey D.A."/>
            <person name="Heiman T.J."/>
            <person name="Hernandez J.R."/>
            <person name="Houck J."/>
            <person name="Hostin D."/>
            <person name="Houston K.A."/>
            <person name="Howland T.J."/>
            <person name="Wei M.-H."/>
            <person name="Ibegwam C."/>
            <person name="Jalali M."/>
            <person name="Kalush F."/>
            <person name="Karpen G.H."/>
            <person name="Ke Z."/>
            <person name="Kennison J.A."/>
            <person name="Ketchum K.A."/>
            <person name="Kimmel B.E."/>
            <person name="Kodira C.D."/>
            <person name="Kraft C.L."/>
            <person name="Kravitz S."/>
            <person name="Kulp D."/>
            <person name="Lai Z."/>
            <person name="Lasko P."/>
            <person name="Lei Y."/>
            <person name="Levitsky A.A."/>
            <person name="Li J.H."/>
            <person name="Li Z."/>
            <person name="Liang Y."/>
            <person name="Lin X."/>
            <person name="Liu X."/>
            <person name="Mattei B."/>
            <person name="McIntosh T.C."/>
            <person name="McLeod M.P."/>
            <person name="McPherson D."/>
            <person name="Merkulov G."/>
            <person name="Milshina N.V."/>
            <person name="Mobarry C."/>
            <person name="Morris J."/>
            <person name="Moshrefi A."/>
            <person name="Mount S.M."/>
            <person name="Moy M."/>
            <person name="Murphy B."/>
            <person name="Murphy L."/>
            <person name="Muzny D.M."/>
            <person name="Nelson D.L."/>
            <person name="Nelson D.R."/>
            <person name="Nelson K.A."/>
            <person name="Nixon K."/>
            <person name="Nusskern D.R."/>
            <person name="Pacleb J.M."/>
            <person name="Palazzolo M."/>
            <person name="Pittman G.S."/>
            <person name="Pan S."/>
            <person name="Pollard J."/>
            <person name="Puri V."/>
            <person name="Reese M.G."/>
            <person name="Reinert K."/>
            <person name="Remington K."/>
            <person name="Saunders R.D.C."/>
            <person name="Scheeler F."/>
            <person name="Shen H."/>
            <person name="Shue B.C."/>
            <person name="Siden-Kiamos I."/>
            <person name="Simpson M."/>
            <person name="Skupski M.P."/>
            <person name="Smith T.J."/>
            <person name="Spier E."/>
            <person name="Spradling A.C."/>
            <person name="Stapleton M."/>
            <person name="Strong R."/>
            <person name="Sun E."/>
            <person name="Svirskas R."/>
            <person name="Tector C."/>
            <person name="Turner R."/>
            <person name="Venter E."/>
            <person name="Wang A.H."/>
            <person name="Wang X."/>
            <person name="Wang Z.-Y."/>
            <person name="Wassarman D.A."/>
            <person name="Weinstock G.M."/>
            <person name="Weissenbach J."/>
            <person name="Williams S.M."/>
            <person name="Woodage T."/>
            <person name="Worley K.C."/>
            <person name="Wu D."/>
            <person name="Yang S."/>
            <person name="Yao Q.A."/>
            <person name="Ye J."/>
            <person name="Yeh R.-F."/>
            <person name="Zaveri J.S."/>
            <person name="Zhan M."/>
            <person name="Zhang G."/>
            <person name="Zhao Q."/>
            <person name="Zheng L."/>
            <person name="Zheng X.H."/>
            <person name="Zhong F.N."/>
            <person name="Zhong W."/>
            <person name="Zhou X."/>
            <person name="Zhu S.C."/>
            <person name="Zhu X."/>
            <person name="Smith H.O."/>
            <person name="Gibbs R.A."/>
            <person name="Myers E.W."/>
            <person name="Rubin G.M."/>
            <person name="Venter J.C."/>
        </authorList>
    </citation>
    <scope>NUCLEOTIDE SEQUENCE [LARGE SCALE GENOMIC DNA]</scope>
    <source>
        <strain>Berkeley</strain>
    </source>
</reference>
<reference key="4">
    <citation type="journal article" date="2002" name="Genome Biol.">
        <title>Annotation of the Drosophila melanogaster euchromatic genome: a systematic review.</title>
        <authorList>
            <person name="Misra S."/>
            <person name="Crosby M.A."/>
            <person name="Mungall C.J."/>
            <person name="Matthews B.B."/>
            <person name="Campbell K.S."/>
            <person name="Hradecky P."/>
            <person name="Huang Y."/>
            <person name="Kaminker J.S."/>
            <person name="Millburn G.H."/>
            <person name="Prochnik S.E."/>
            <person name="Smith C.D."/>
            <person name="Tupy J.L."/>
            <person name="Whitfield E.J."/>
            <person name="Bayraktaroglu L."/>
            <person name="Berman B.P."/>
            <person name="Bettencourt B.R."/>
            <person name="Celniker S.E."/>
            <person name="de Grey A.D.N.J."/>
            <person name="Drysdale R.A."/>
            <person name="Harris N.L."/>
            <person name="Richter J."/>
            <person name="Russo S."/>
            <person name="Schroeder A.J."/>
            <person name="Shu S.Q."/>
            <person name="Stapleton M."/>
            <person name="Yamada C."/>
            <person name="Ashburner M."/>
            <person name="Gelbart W.M."/>
            <person name="Rubin G.M."/>
            <person name="Lewis S.E."/>
        </authorList>
    </citation>
    <scope>GENOME REANNOTATION</scope>
    <scope>ALTERNATIVE SPLICING</scope>
    <source>
        <strain>Berkeley</strain>
    </source>
</reference>
<reference key="5">
    <citation type="journal article" date="1987" name="J. Biol. Chem.">
        <title>Analysis of the 5' end of the Drosophila muscle myosin heavy chain gene. Alternatively spliced transcripts initiate at a single site and intron locations are conserved compared to myosin genes of other organisms.</title>
        <authorList>
            <person name="Wassenberg D.R. II"/>
            <person name="Kronert W.A."/>
            <person name="O'Donnell P.T."/>
            <person name="Bernstein S.I."/>
        </authorList>
    </citation>
    <scope>NUCLEOTIDE SEQUENCE [GENOMIC DNA] OF 1-264</scope>
</reference>
<reference key="6">
    <citation type="journal article" date="1991" name="EMBO J.">
        <title>Muscle-specific accumulation of Drosophila myosin heavy chains: a splicing mutation in an alternative exon results in an isoform substitution.</title>
        <authorList>
            <person name="Kronert W.A."/>
            <person name="Edwards K.A."/>
            <person name="Roche E.S."/>
            <person name="Wells L."/>
            <person name="Bernstein S.I."/>
        </authorList>
    </citation>
    <scope>NUCLEOTIDE SEQUENCE [GENOMIC DNA] OF 333-614</scope>
    <source>
        <strain>Canton-S</strain>
        <tissue>Embryonic muscle</tissue>
    </source>
</reference>
<reference key="7">
    <citation type="journal article" date="1986" name="Mol. Cell. Biol.">
        <title>Alternative RNA splicing generates transcripts encoding a thorax-specific isoform of Drosophila melanogaster myosin heavy chain.</title>
        <authorList>
            <person name="Bernstein S.I."/>
            <person name="Hansen C.J."/>
            <person name="Becker K.D."/>
            <person name="Wassenberg D.R. II"/>
            <person name="Roche E.S."/>
            <person name="Donady J.J."/>
            <person name="Emerson C.P. Jr."/>
        </authorList>
    </citation>
    <scope>NUCLEOTIDE SEQUENCE [GENOMIC DNA] OF 1774-1962</scope>
</reference>
<reference key="8">
    <citation type="unpublished observations" date="1982-01">
        <authorList>
            <person name="Bernstein S.I."/>
        </authorList>
    </citation>
    <scope>PROTEIN SEQUENCE OF 1778-1938</scope>
</reference>
<proteinExistence type="evidence at protein level"/>
<evidence type="ECO:0000250" key="1"/>
<evidence type="ECO:0000255" key="2"/>
<evidence type="ECO:0000255" key="3">
    <source>
        <dbReference type="PROSITE-ProRule" id="PRU00116"/>
    </source>
</evidence>
<evidence type="ECO:0000255" key="4">
    <source>
        <dbReference type="PROSITE-ProRule" id="PRU00782"/>
    </source>
</evidence>
<evidence type="ECO:0000255" key="5">
    <source>
        <dbReference type="PROSITE-ProRule" id="PRU01190"/>
    </source>
</evidence>
<evidence type="ECO:0000256" key="6">
    <source>
        <dbReference type="SAM" id="MobiDB-lite"/>
    </source>
</evidence>
<evidence type="ECO:0000269" key="7">
    <source>
    </source>
</evidence>
<evidence type="ECO:0000305" key="8"/>
<evidence type="ECO:0007829" key="9">
    <source>
        <dbReference type="PDB" id="5W1A"/>
    </source>
</evidence>
<protein>
    <recommendedName>
        <fullName>Myosin heavy chain, muscle</fullName>
    </recommendedName>
</protein>
<sequence>MPKPVANQEDEDPTPYLFVSLEQRRIDQSKPYDSKKSCWIPDEKEGYLLGEIKATKGDIVSVGLQGGEVRDIKSEKVEKVNPPKFEKIEDMADMTVLNTPCVLHNLRQRYYAKLIYTYSGLFCVAINPYKRYPVYTNRCAKMYRGKRRNEVPPHIFAISDGAYVDMLTNHVNQSMLITGESGAGKTENTKKVIAYFATVGASKKTDEAAKSKGSLEDQVVQTNPVLEAFGNAKTVRNDNSSRFGKFIRIHFGPTGKLAGADIETYLLEKARVISQQSLERSYHIFYQIMSGSVPGVKDICLLTDNIYDYHIVSQGKVTVASIDDAEEFSLTDQAFDILGFTKQEKEDVYRITAAVMHMGGMKFKQRGREEQAEQDGEEEGGRVSKLFGCDTAELYKNLLKPRIKVGNEFVTQGRNVQQVTNSIGALCKGVFDRLFKWLVKKCNETLDTQQKRQHFIGVLDIAGFEIFEYNGFEQLCINFTNEKLQQFFNHIMFVMEQEEYKKEGINWDFIDFGMDLLACIDLIEKPMGILSILEEESMFPKATDQTFSEKLTNTHLGKSAPFQKPKPPKPGQQAAHFAIAHYAGCVSYNITGWLEKNKDPLNDTVVDQFKKSQNKLLIEIFADHAGQSGGGEQAKGGRGKKGGGFATVSSAYKEQLNSLMTTLRSTQPHFVRCIIPNEMKQPGVVDAHLVMHQLTCNGVLEGIRICRKGFPNRMMYPDFKMRYQILNPRGIKDLDCPKKASKVLIESTELNEDLYRLGHTKVFFRAGVLGQMEEFRDERLGKIMSWMQAWARGYLSRKGFKKLQEQRVALKVVQRNLRKYLQLRTWPWYKLWQKVKPLLNVSRIEDEIARLEEKAKKAEELHAAEVKVRKELEALNAKLLAEKTALLDSLSGEKGALQDYQERNAKLTAQKNDLENQLRDIQERLTQEEDARNQLFQQKKKADQEISGLKKDIEDLELNVQKAEQDKATKDHQIRNLNDEIAHQDELINKLNKEKKMQGETNQKTGEELQAAEDKINHLNKVKAKLEQTLDELEDSLEREKKVRGDVEKSKRKVEGDLKLTQEAVADLERNKKELEQTIQRKDKELSSITAKLEDEQVVVLKHQRQIKELQARIEELEEEVEAERQARAKAEKQRADLARELEELGERLEEAGGATSAQIELNKKREAELSKLRRDLEEANIQHESTLANLRKKHNDAVAEMAEQVDQLNKLKAKAEHDRQTCHNELNQTRTACDQLGRDKAAQEKIAKQLQHTLNEVQSKLDETNRTLNDFDASKKKLSIENSDLLRQLEEAESQVSQLSKIKISLTTQLEDTKRLADEESRERATLLGKFRNLEHDLDNLREQVEEEAEGKADLQRQLSKANAEAQVWRSKYESDGVARSEELEEAKRKLQARLAEAEETIESLNQKCIGLEKTKQRLSTEVEDLQLEVDRANAIANAAEKKQKAFDKIIGEWKLKVDDLAAELDASQKECRNYSTELFRLKGAYEEGQEQLEAVRRENKNLADEVKDLLDQIGEGGRNIHEIEKARKRLEAEKDELQAALEEAEAALEQEENKVLRAQLELSQVRQEIDRRIQEKEEEFENTRKNHQRALDSMQASLEAEAKGKAEALRMKKKLEADINELEIALDHANKANAEAQKNIKRYQQQLKDIQTALEEEQRARDDAREQLGISERRANALQNELEESRTLLEQADRGRRQAEQELADAHEQLNEVSAQNASISAAKRKLESELQTLHSDLDELLNEAKNSEEKAKKAMVDAARLADELRAEQDHAQTQEKLRKALEQQIKELQVRLDEAEANALKGGKKAIQKLEQRVRELENELDGEQRRHADAQKNLRKSERRVKELSFQSEEDRKNHERMQDLVDKLQQKIKTYKRQIEEAEEIAALNLAKFRKAQQELEEAEERADLAEQAISKFRAKGRAGSVGRGASPAPRATSVRPQFDGLAFPPRFDLAPENEF</sequence>
<organism>
    <name type="scientific">Drosophila melanogaster</name>
    <name type="common">Fruit fly</name>
    <dbReference type="NCBI Taxonomy" id="7227"/>
    <lineage>
        <taxon>Eukaryota</taxon>
        <taxon>Metazoa</taxon>
        <taxon>Ecdysozoa</taxon>
        <taxon>Arthropoda</taxon>
        <taxon>Hexapoda</taxon>
        <taxon>Insecta</taxon>
        <taxon>Pterygota</taxon>
        <taxon>Neoptera</taxon>
        <taxon>Endopterygota</taxon>
        <taxon>Diptera</taxon>
        <taxon>Brachycera</taxon>
        <taxon>Muscomorpha</taxon>
        <taxon>Ephydroidea</taxon>
        <taxon>Drosophilidae</taxon>
        <taxon>Drosophila</taxon>
        <taxon>Sophophora</taxon>
    </lineage>
</organism>
<comment type="function">
    <text>Muscle contraction.</text>
</comment>
<comment type="subunit">
    <text>Muscle myosin is a hexameric protein that consists of 2 heavy chain subunits (MHC), 2 alkali light chain subunits (MLC) and 2 regulatory light chain subunits (MLC-2).</text>
</comment>
<comment type="interaction">
    <interactant intactId="EBI-195031">
        <id>P05661</id>
    </interactant>
    <interactant intactId="EBI-26709917">
        <id>P91941</id>
        <label>Acp65Aa</label>
    </interactant>
    <organismsDiffer>false</organismsDiffer>
    <experiments>2</experiments>
</comment>
<comment type="subcellular location">
    <subcellularLocation>
        <location>Cytoplasm</location>
        <location>Myofibril</location>
    </subcellularLocation>
    <text>Thick filaments of the myofibrils.</text>
</comment>
<comment type="alternative products">
    <event type="alternative splicing"/>
    <isoform>
        <id>P05661-1</id>
        <name>AAAAA</name>
        <sequence type="displayed"/>
    </isoform>
    <isoform>
        <id>P05661-2</id>
        <name>BDBBA</name>
        <name>B</name>
        <sequence type="described" ref="VSP_003329 VSP_003332 VSP_003333 VSP_003335"/>
    </isoform>
    <isoform>
        <id>P05661-3</id>
        <name>BABDB</name>
        <name>A</name>
        <sequence type="described" ref="VSP_003329 VSP_003333 VSP_003337 VSP_003339"/>
    </isoform>
    <isoform>
        <id>P05661-4</id>
        <name>3b</name>
        <sequence type="described" ref="VSP_003329"/>
    </isoform>
    <isoform>
        <id>P05661-5</id>
        <name>7b</name>
        <sequence type="described" ref="VSP_003330"/>
    </isoform>
    <isoform>
        <id>P05661-6</id>
        <name>7c</name>
        <sequence type="described" ref="VSP_003331"/>
    </isoform>
    <isoform>
        <id>P05661-7</id>
        <name>7d</name>
        <sequence type="described" ref="VSP_003332"/>
    </isoform>
    <isoform>
        <id>P05661-8</id>
        <name>9b</name>
        <sequence type="described" ref="VSP_003333"/>
    </isoform>
    <isoform>
        <id>P05661-9</id>
        <name>9c</name>
        <sequence type="described" ref="VSP_003334"/>
    </isoform>
    <isoform>
        <id>P05661-10</id>
        <name>11b</name>
        <sequence type="described" ref="VSP_003335"/>
    </isoform>
    <isoform>
        <id>P05661-11</id>
        <name>11c</name>
        <sequence type="described" ref="VSP_003336"/>
    </isoform>
    <isoform>
        <id>P05661-12</id>
        <name>11d</name>
        <sequence type="described" ref="VSP_003337"/>
    </isoform>
    <isoform>
        <id>P05661-13</id>
        <name>11e</name>
        <sequence type="described" ref="VSP_003338"/>
    </isoform>
    <isoform>
        <id>P05661-14</id>
        <name>15b</name>
        <sequence type="described" ref="VSP_003339"/>
    </isoform>
    <isoform>
        <id>P05661-15</id>
        <name>18</name>
        <sequence type="described" ref="VSP_003340 VSP_003341"/>
    </isoform>
    <isoform>
        <id>P05661-16</id>
        <name>C</name>
        <sequence type="described" ref="VSP_003333 VSP_003336 VSP_003339"/>
    </isoform>
    <isoform>
        <id>P05661-17</id>
        <name>D</name>
        <sequence type="described" ref="VSP_003329 VSP_003333 VSP_003336 VSP_003339"/>
    </isoform>
    <isoform>
        <id>P05661-18</id>
        <name>E</name>
        <sequence type="described" ref="VSP_003334 VSP_003337 VSP_003339"/>
    </isoform>
    <isoform>
        <id>P05661-19</id>
        <name>F</name>
        <sequence type="described" ref="VSP_003329 VSP_003333 VSP_003339"/>
    </isoform>
    <isoform>
        <id>P05661-20</id>
        <name>G</name>
        <sequence type="described" ref="VSP_003333 VSP_003337 VSP_003339"/>
    </isoform>
    <isoform>
        <id>P05661-21</id>
        <name>H</name>
        <sequence type="described" ref="VSP_003329 VSP_003334 VSP_003337 VSP_003339"/>
    </isoform>
    <isoform>
        <id>P05661-22</id>
        <name>I</name>
        <sequence type="described" ref="VSP_003329 VSP_003334 VSP_003336 VSP_003339"/>
    </isoform>
    <isoform>
        <id>P05661-23</id>
        <name>Q</name>
        <sequence type="described" ref="VSP_003330 VSP_003333 VSP_003337 VSP_003339"/>
    </isoform>
    <isoform>
        <id>P05661-24</id>
        <name>K</name>
        <sequence type="described" ref="VSP_003329 VSP_003332 VSP_003338 VSP_003340 VSP_003341"/>
    </isoform>
    <isoform>
        <id>P05661-25</id>
        <name>L</name>
        <sequence type="described" ref="VSP_003329 VSP_003332 VSP_003335 VSP_003340 VSP_003341"/>
    </isoform>
    <isoform>
        <id>P05661-26</id>
        <name>M</name>
        <sequence type="described" ref="VSP_003329 VSP_003332 VSP_003333 VSP_003335 VSP_003340 VSP_003341"/>
    </isoform>
    <text>Additional isoforms seem to exist. Exons 3, 7, 9, 11 and 15 are mutually exclusive splicing exons and exon 18 is included or excluded.</text>
</comment>
<comment type="tissue specificity">
    <text evidence="7">Expressed in larval and adult muscles. Isoforms containing exon 9a are expressed in indirect flight muscles, exons 9a and 9b are expressed in jump muscles, exons 9b and 9c are expressed in other larval and adult muscles.</text>
</comment>
<comment type="domain">
    <text>Alternative splicing exons contribute to the specialized contractile activities of different muscle types. Exon 3 encodes the hydrophobic pocket adjacent to the ATP-binding site, exon 9 is adjacent to the actin-binding domain, exon 11 is involved in actin-binding, exon 15 in the S2 hinge and exons 18 and 19 the non-coiled tail region.</text>
</comment>
<comment type="domain">
    <text evidence="8">Limited proteolysis of myosin heavy chain produces 1 light meromyosin (LMM) and 1 heavy meromyosin (HMM). HMM can be further cleaved into 2 globular subfragments (S1) and 1 rod-shaped subfragment (S2).</text>
</comment>
<comment type="similarity">
    <text evidence="8">Belongs to the TRAFAC class myosin-kinesin ATPase superfamily. Myosin family.</text>
</comment>